<feature type="chain" id="PRO_0000344761" description="Large ribosomal subunit protein bL36c">
    <location>
        <begin position="1"/>
        <end position="37"/>
    </location>
</feature>
<gene>
    <name evidence="1" type="primary">rpl36</name>
    <name type="ordered locus">GuabCp056</name>
</gene>
<sequence>MKIRASVRKICEKCRLIRRRGRIIVICSNPRHKQRQG</sequence>
<proteinExistence type="inferred from homology"/>
<reference key="1">
    <citation type="submission" date="2008-03" db="EMBL/GenBank/DDBJ databases">
        <title>Guizotia abyssinica chloroplast sequenced using Solexa.</title>
        <authorList>
            <person name="Kane N.C."/>
            <person name="Dempewolf H."/>
            <person name="Stewart M.L."/>
            <person name="Cronk Q."/>
            <person name="Rieseberrg L.H."/>
        </authorList>
    </citation>
    <scope>NUCLEOTIDE SEQUENCE [LARGE SCALE GENOMIC DNA]</scope>
    <source>
        <strain>cv. PI 508077</strain>
    </source>
</reference>
<dbReference type="EMBL" id="EU549769">
    <property type="protein sequence ID" value="ACB86560.1"/>
    <property type="molecule type" value="Genomic_DNA"/>
</dbReference>
<dbReference type="RefSeq" id="YP_001837394.1">
    <property type="nucleotide sequence ID" value="NC_010601.1"/>
</dbReference>
<dbReference type="SMR" id="B2LMM7"/>
<dbReference type="GeneID" id="6219164"/>
<dbReference type="GO" id="GO:0009507">
    <property type="term" value="C:chloroplast"/>
    <property type="evidence" value="ECO:0007669"/>
    <property type="project" value="UniProtKB-SubCell"/>
</dbReference>
<dbReference type="GO" id="GO:1990904">
    <property type="term" value="C:ribonucleoprotein complex"/>
    <property type="evidence" value="ECO:0007669"/>
    <property type="project" value="UniProtKB-KW"/>
</dbReference>
<dbReference type="GO" id="GO:0005840">
    <property type="term" value="C:ribosome"/>
    <property type="evidence" value="ECO:0007669"/>
    <property type="project" value="UniProtKB-KW"/>
</dbReference>
<dbReference type="GO" id="GO:0003735">
    <property type="term" value="F:structural constituent of ribosome"/>
    <property type="evidence" value="ECO:0007669"/>
    <property type="project" value="InterPro"/>
</dbReference>
<dbReference type="GO" id="GO:0006412">
    <property type="term" value="P:translation"/>
    <property type="evidence" value="ECO:0007669"/>
    <property type="project" value="UniProtKB-UniRule"/>
</dbReference>
<dbReference type="HAMAP" id="MF_00251">
    <property type="entry name" value="Ribosomal_bL36"/>
    <property type="match status" value="1"/>
</dbReference>
<dbReference type="InterPro" id="IPR000473">
    <property type="entry name" value="Ribosomal_bL36"/>
</dbReference>
<dbReference type="InterPro" id="IPR035977">
    <property type="entry name" value="Ribosomal_bL36_sp"/>
</dbReference>
<dbReference type="NCBIfam" id="TIGR01022">
    <property type="entry name" value="rpmJ_bact"/>
    <property type="match status" value="1"/>
</dbReference>
<dbReference type="PANTHER" id="PTHR42888">
    <property type="entry name" value="50S RIBOSOMAL PROTEIN L36, CHLOROPLASTIC"/>
    <property type="match status" value="1"/>
</dbReference>
<dbReference type="PANTHER" id="PTHR42888:SF1">
    <property type="entry name" value="LARGE RIBOSOMAL SUBUNIT PROTEIN BL36C"/>
    <property type="match status" value="1"/>
</dbReference>
<dbReference type="Pfam" id="PF00444">
    <property type="entry name" value="Ribosomal_L36"/>
    <property type="match status" value="1"/>
</dbReference>
<dbReference type="SUPFAM" id="SSF57840">
    <property type="entry name" value="Ribosomal protein L36"/>
    <property type="match status" value="1"/>
</dbReference>
<dbReference type="PROSITE" id="PS00828">
    <property type="entry name" value="RIBOSOMAL_L36"/>
    <property type="match status" value="1"/>
</dbReference>
<keyword id="KW-0150">Chloroplast</keyword>
<keyword id="KW-0934">Plastid</keyword>
<keyword id="KW-0687">Ribonucleoprotein</keyword>
<keyword id="KW-0689">Ribosomal protein</keyword>
<name>RK36_GUIAB</name>
<evidence type="ECO:0000255" key="1">
    <source>
        <dbReference type="HAMAP-Rule" id="MF_00251"/>
    </source>
</evidence>
<evidence type="ECO:0000305" key="2"/>
<organism>
    <name type="scientific">Guizotia abyssinica</name>
    <name type="common">Niger</name>
    <name type="synonym">Ramtilla</name>
    <dbReference type="NCBI Taxonomy" id="4230"/>
    <lineage>
        <taxon>Eukaryota</taxon>
        <taxon>Viridiplantae</taxon>
        <taxon>Streptophyta</taxon>
        <taxon>Embryophyta</taxon>
        <taxon>Tracheophyta</taxon>
        <taxon>Spermatophyta</taxon>
        <taxon>Magnoliopsida</taxon>
        <taxon>eudicotyledons</taxon>
        <taxon>Gunneridae</taxon>
        <taxon>Pentapetalae</taxon>
        <taxon>asterids</taxon>
        <taxon>campanulids</taxon>
        <taxon>Asterales</taxon>
        <taxon>Asteraceae</taxon>
        <taxon>Asteroideae</taxon>
        <taxon>Heliantheae alliance</taxon>
        <taxon>Millerieae</taxon>
        <taxon>Guizotia</taxon>
    </lineage>
</organism>
<protein>
    <recommendedName>
        <fullName evidence="1">Large ribosomal subunit protein bL36c</fullName>
    </recommendedName>
    <alternativeName>
        <fullName evidence="2">50S ribosomal protein L36, chloroplastic</fullName>
    </alternativeName>
</protein>
<accession>B2LMM7</accession>
<comment type="subcellular location">
    <subcellularLocation>
        <location>Plastid</location>
        <location>Chloroplast</location>
    </subcellularLocation>
</comment>
<comment type="similarity">
    <text evidence="1">Belongs to the bacterial ribosomal protein bL36 family.</text>
</comment>
<geneLocation type="chloroplast"/>